<sequence length="113" mass="12977">MAQSPAAASPGAPEQGCPIRVEHDRRRRQFTVRLNGCHDRAVLLYEYVGKRIVDLQHTEVPDAYRGRGIAKHLAKAALDFVVEEDLRAHVTCWYIQKFVKENPLPQYLERLQP</sequence>
<name>NATD1_BOVIN</name>
<proteinExistence type="inferred from homology"/>
<keyword id="KW-1185">Reference proteome</keyword>
<feature type="chain" id="PRO_0000320655" description="Protein NATD1">
    <location>
        <begin position="1"/>
        <end position="113"/>
    </location>
</feature>
<feature type="domain" description="N-acetyltransferase" evidence="1">
    <location>
        <begin position="22"/>
        <end position="112"/>
    </location>
</feature>
<feature type="region of interest" description="Disordered" evidence="2">
    <location>
        <begin position="1"/>
        <end position="20"/>
    </location>
</feature>
<feature type="compositionally biased region" description="Low complexity" evidence="2">
    <location>
        <begin position="1"/>
        <end position="16"/>
    </location>
</feature>
<reference key="1">
    <citation type="submission" date="2007-06" db="EMBL/GenBank/DDBJ databases">
        <authorList>
            <consortium name="NIH - Mammalian Gene Collection (MGC) project"/>
        </authorList>
    </citation>
    <scope>NUCLEOTIDE SEQUENCE [LARGE SCALE MRNA]</scope>
    <source>
        <strain>Hereford</strain>
        <tissue>Hypothalamus</tissue>
    </source>
</reference>
<dbReference type="EMBL" id="BC147869">
    <property type="protein sequence ID" value="AAI47870.1"/>
    <property type="molecule type" value="mRNA"/>
</dbReference>
<dbReference type="RefSeq" id="NP_001095801.1">
    <property type="nucleotide sequence ID" value="NM_001102331.2"/>
</dbReference>
<dbReference type="RefSeq" id="NP_001422021.1">
    <property type="nucleotide sequence ID" value="NM_001435092.1"/>
</dbReference>
<dbReference type="RefSeq" id="XP_005220474.1">
    <property type="nucleotide sequence ID" value="XM_005220417.3"/>
</dbReference>
<dbReference type="SMR" id="A6QL79"/>
<dbReference type="FunCoup" id="A6QL79">
    <property type="interactions" value="325"/>
</dbReference>
<dbReference type="PaxDb" id="9913-ENSBTAP00000054009"/>
<dbReference type="Ensembl" id="ENSBTAT00000132519.1">
    <property type="protein sequence ID" value="ENSBTAP00000086684.1"/>
    <property type="gene ID" value="ENSBTAG00000069865.1"/>
</dbReference>
<dbReference type="GeneID" id="783664"/>
<dbReference type="KEGG" id="bta:783664"/>
<dbReference type="CTD" id="256302"/>
<dbReference type="eggNOG" id="ENOG502S2NM">
    <property type="taxonomic scope" value="Eukaryota"/>
</dbReference>
<dbReference type="GeneTree" id="ENSGT00390000014840"/>
<dbReference type="HOGENOM" id="CLU_132888_1_1_1"/>
<dbReference type="InParanoid" id="A6QL79"/>
<dbReference type="OrthoDB" id="74247at2759"/>
<dbReference type="TreeFam" id="TF314063"/>
<dbReference type="Proteomes" id="UP000009136">
    <property type="component" value="Chromosome 19"/>
</dbReference>
<dbReference type="FunFam" id="3.40.630.30:FF:000030">
    <property type="entry name" value="NATD1 isoform 1"/>
    <property type="match status" value="1"/>
</dbReference>
<dbReference type="Gene3D" id="3.40.630.30">
    <property type="match status" value="1"/>
</dbReference>
<dbReference type="InterPro" id="IPR016181">
    <property type="entry name" value="Acyl_CoA_acyltransferase"/>
</dbReference>
<dbReference type="InterPro" id="IPR045057">
    <property type="entry name" value="Gcn5-rel_NAT"/>
</dbReference>
<dbReference type="InterPro" id="IPR031165">
    <property type="entry name" value="GNAT_YJDJ"/>
</dbReference>
<dbReference type="PANTHER" id="PTHR31435">
    <property type="entry name" value="PROTEIN NATD1"/>
    <property type="match status" value="1"/>
</dbReference>
<dbReference type="PANTHER" id="PTHR31435:SF9">
    <property type="entry name" value="PROTEIN NATD1"/>
    <property type="match status" value="1"/>
</dbReference>
<dbReference type="Pfam" id="PF14542">
    <property type="entry name" value="Acetyltransf_CG"/>
    <property type="match status" value="1"/>
</dbReference>
<dbReference type="SUPFAM" id="SSF55729">
    <property type="entry name" value="Acyl-CoA N-acyltransferases (Nat)"/>
    <property type="match status" value="1"/>
</dbReference>
<dbReference type="PROSITE" id="PS51729">
    <property type="entry name" value="GNAT_YJDJ"/>
    <property type="match status" value="1"/>
</dbReference>
<gene>
    <name type="primary">NATD1</name>
    <name type="synonym">GTLF3B</name>
</gene>
<protein>
    <recommendedName>
        <fullName>Protein NATD1</fullName>
    </recommendedName>
    <alternativeName>
        <fullName>N-acetyltransferase domain-containing protein 1</fullName>
    </alternativeName>
</protein>
<evidence type="ECO:0000255" key="1">
    <source>
        <dbReference type="PROSITE-ProRule" id="PRU00532"/>
    </source>
</evidence>
<evidence type="ECO:0000256" key="2">
    <source>
        <dbReference type="SAM" id="MobiDB-lite"/>
    </source>
</evidence>
<evidence type="ECO:0000305" key="3"/>
<organism>
    <name type="scientific">Bos taurus</name>
    <name type="common">Bovine</name>
    <dbReference type="NCBI Taxonomy" id="9913"/>
    <lineage>
        <taxon>Eukaryota</taxon>
        <taxon>Metazoa</taxon>
        <taxon>Chordata</taxon>
        <taxon>Craniata</taxon>
        <taxon>Vertebrata</taxon>
        <taxon>Euteleostomi</taxon>
        <taxon>Mammalia</taxon>
        <taxon>Eutheria</taxon>
        <taxon>Laurasiatheria</taxon>
        <taxon>Artiodactyla</taxon>
        <taxon>Ruminantia</taxon>
        <taxon>Pecora</taxon>
        <taxon>Bovidae</taxon>
        <taxon>Bovinae</taxon>
        <taxon>Bos</taxon>
    </lineage>
</organism>
<comment type="similarity">
    <text evidence="3">Belongs to the NATD1 family.</text>
</comment>
<accession>A6QL79</accession>